<dbReference type="EC" id="2.7.1.134" evidence="4"/>
<dbReference type="EC" id="2.7.1.159" evidence="4"/>
<dbReference type="EMBL" id="CM000128">
    <property type="protein sequence ID" value="EEC76104.1"/>
    <property type="molecule type" value="Genomic_DNA"/>
</dbReference>
<dbReference type="SMR" id="B8AR41"/>
<dbReference type="STRING" id="39946.B8AR41"/>
<dbReference type="EnsemblPlants" id="BGIOSGA013495-TA">
    <property type="protein sequence ID" value="BGIOSGA013495-PA"/>
    <property type="gene ID" value="BGIOSGA013495"/>
</dbReference>
<dbReference type="EnsemblPlants" id="OsGoSa_03g0032810.01">
    <property type="protein sequence ID" value="OsGoSa_03g0032810.01"/>
    <property type="gene ID" value="OsGoSa_03g0032810"/>
</dbReference>
<dbReference type="EnsemblPlants" id="OsIR64_03g0032570.01">
    <property type="protein sequence ID" value="OsIR64_03g0032570.01"/>
    <property type="gene ID" value="OsIR64_03g0032570"/>
</dbReference>
<dbReference type="EnsemblPlants" id="OsKYG_03g0033010.01">
    <property type="protein sequence ID" value="OsKYG_03g0033010.01"/>
    <property type="gene ID" value="OsKYG_03g0033010"/>
</dbReference>
<dbReference type="EnsemblPlants" id="OsLima_03g0033010.01">
    <property type="protein sequence ID" value="OsLima_03g0033010.01"/>
    <property type="gene ID" value="OsLima_03g0033010"/>
</dbReference>
<dbReference type="EnsemblPlants" id="OsLiXu_03g0032770.01">
    <property type="protein sequence ID" value="OsLiXu_03g0032770.01"/>
    <property type="gene ID" value="OsLiXu_03g0032770"/>
</dbReference>
<dbReference type="EnsemblPlants" id="OsMH63_03G032830_01">
    <property type="protein sequence ID" value="OsMH63_03G032830_01"/>
    <property type="gene ID" value="OsMH63_03G032830"/>
</dbReference>
<dbReference type="EnsemblPlants" id="OsPr106_03g0032820.01">
    <property type="protein sequence ID" value="OsPr106_03g0032820.01"/>
    <property type="gene ID" value="OsPr106_03g0032820"/>
</dbReference>
<dbReference type="EnsemblPlants" id="OsZS97_03G032770_02">
    <property type="protein sequence ID" value="OsZS97_03G032770_02"/>
    <property type="gene ID" value="OsZS97_03G032770"/>
</dbReference>
<dbReference type="Gramene" id="BGIOSGA013495-TA">
    <property type="protein sequence ID" value="BGIOSGA013495-PA"/>
    <property type="gene ID" value="BGIOSGA013495"/>
</dbReference>
<dbReference type="Gramene" id="OsGoSa_03g0032810.01">
    <property type="protein sequence ID" value="OsGoSa_03g0032810.01"/>
    <property type="gene ID" value="OsGoSa_03g0032810"/>
</dbReference>
<dbReference type="Gramene" id="OsIR64_03g0032570.01">
    <property type="protein sequence ID" value="OsIR64_03g0032570.01"/>
    <property type="gene ID" value="OsIR64_03g0032570"/>
</dbReference>
<dbReference type="Gramene" id="OsKYG_03g0033010.01">
    <property type="protein sequence ID" value="OsKYG_03g0033010.01"/>
    <property type="gene ID" value="OsKYG_03g0033010"/>
</dbReference>
<dbReference type="Gramene" id="OsLima_03g0033010.01">
    <property type="protein sequence ID" value="OsLima_03g0033010.01"/>
    <property type="gene ID" value="OsLima_03g0033010"/>
</dbReference>
<dbReference type="Gramene" id="OsLiXu_03g0032770.01">
    <property type="protein sequence ID" value="OsLiXu_03g0032770.01"/>
    <property type="gene ID" value="OsLiXu_03g0032770"/>
</dbReference>
<dbReference type="Gramene" id="OsMH63_03G032830_01">
    <property type="protein sequence ID" value="OsMH63_03G032830_01"/>
    <property type="gene ID" value="OsMH63_03G032830"/>
</dbReference>
<dbReference type="Gramene" id="OsPr106_03g0032820.01">
    <property type="protein sequence ID" value="OsPr106_03g0032820.01"/>
    <property type="gene ID" value="OsPr106_03g0032820"/>
</dbReference>
<dbReference type="Gramene" id="OsZS97_03G032770_02">
    <property type="protein sequence ID" value="OsZS97_03G032770_02"/>
    <property type="gene ID" value="OsZS97_03G032770"/>
</dbReference>
<dbReference type="HOGENOM" id="CLU_041857_0_0_1"/>
<dbReference type="OMA" id="QHLYNRQ"/>
<dbReference type="OrthoDB" id="25308at2759"/>
<dbReference type="Proteomes" id="UP000007015">
    <property type="component" value="Chromosome 3"/>
</dbReference>
<dbReference type="GO" id="GO:0005737">
    <property type="term" value="C:cytoplasm"/>
    <property type="evidence" value="ECO:0007669"/>
    <property type="project" value="TreeGrafter"/>
</dbReference>
<dbReference type="GO" id="GO:0005524">
    <property type="term" value="F:ATP binding"/>
    <property type="evidence" value="ECO:0007669"/>
    <property type="project" value="UniProtKB-KW"/>
</dbReference>
<dbReference type="GO" id="GO:0052726">
    <property type="term" value="F:inositol-1,3,4-trisphosphate 5-kinase activity"/>
    <property type="evidence" value="ECO:0007669"/>
    <property type="project" value="InterPro"/>
</dbReference>
<dbReference type="GO" id="GO:0052725">
    <property type="term" value="F:inositol-1,3,4-trisphosphate 6-kinase activity"/>
    <property type="evidence" value="ECO:0007669"/>
    <property type="project" value="InterPro"/>
</dbReference>
<dbReference type="GO" id="GO:0047325">
    <property type="term" value="F:inositol-3,4,5,6-tetrakisphosphate 1-kinase activity"/>
    <property type="evidence" value="ECO:0007669"/>
    <property type="project" value="UniProtKB-EC"/>
</dbReference>
<dbReference type="GO" id="GO:0000287">
    <property type="term" value="F:magnesium ion binding"/>
    <property type="evidence" value="ECO:0007669"/>
    <property type="project" value="InterPro"/>
</dbReference>
<dbReference type="GO" id="GO:0032957">
    <property type="term" value="P:inositol trisphosphate metabolic process"/>
    <property type="evidence" value="ECO:0007669"/>
    <property type="project" value="InterPro"/>
</dbReference>
<dbReference type="Gene3D" id="3.30.470.20">
    <property type="entry name" value="ATP-grasp fold, B domain"/>
    <property type="match status" value="1"/>
</dbReference>
<dbReference type="InterPro" id="IPR008656">
    <property type="entry name" value="Inositol_tetrakis-P_1-kinase"/>
</dbReference>
<dbReference type="InterPro" id="IPR040464">
    <property type="entry name" value="InsP(3)kin_ATP-grasp"/>
</dbReference>
<dbReference type="InterPro" id="IPR041429">
    <property type="entry name" value="ITPK1_N"/>
</dbReference>
<dbReference type="PANTHER" id="PTHR14217">
    <property type="entry name" value="INOSITOL-TETRAKISPHOSPHATE 1-KINASE"/>
    <property type="match status" value="1"/>
</dbReference>
<dbReference type="PANTHER" id="PTHR14217:SF36">
    <property type="entry name" value="INOSITOL-TETRAKISPHOSPHATE 1-KINASE 3"/>
    <property type="match status" value="1"/>
</dbReference>
<dbReference type="Pfam" id="PF05770">
    <property type="entry name" value="Ins134_P3_kin"/>
    <property type="match status" value="1"/>
</dbReference>
<dbReference type="Pfam" id="PF17927">
    <property type="entry name" value="Ins134_P3_kin_N"/>
    <property type="match status" value="1"/>
</dbReference>
<dbReference type="PIRSF" id="PIRSF038186">
    <property type="entry name" value="ITPK"/>
    <property type="match status" value="1"/>
</dbReference>
<dbReference type="SUPFAM" id="SSF56059">
    <property type="entry name" value="Glutathione synthetase ATP-binding domain-like"/>
    <property type="match status" value="1"/>
</dbReference>
<protein>
    <recommendedName>
        <fullName evidence="4">Inositol-tetrakisphosphate 1-kinase 3</fullName>
        <ecNumber evidence="4">2.7.1.134</ecNumber>
    </recommendedName>
    <alternativeName>
        <fullName evidence="4">Inositol 1,3,4-trisphosphate 5/6-kinase 3</fullName>
        <shortName evidence="4">Inositol-triphosphate 5/6-kinase 3</shortName>
        <shortName evidence="4">Ins(1,3,4)P(3) 5/6-kinase 3</shortName>
        <shortName evidence="4">OsITP5/6K-3</shortName>
        <shortName evidence="4">OsITPK3</shortName>
        <ecNumber evidence="4">2.7.1.159</ecNumber>
    </alternativeName>
</protein>
<sequence>MVSGGRVGGGEGEAGEAAEVAVAMVDNEEEVAQAQAPPAAAVAARELVVGYALTSKKAKSFLQPKLRGLARKKGILFVAIDQKRPLSDQGPFDIVLHKLTGREWQQLLEEYREEHPEVTVLDPPGAIEHLLNRQSMLQEVSELDLSDCHGRVGVPKQLFVNTDPSSIPAAVMRAGLSLPLVAKPLVAKSHELSLAYDPISLTKLEPPLVLQEFVNHGGVLFKVYIVGDAIRVVRRFSLPNVDVGDLSNNAGVFRFPRVSCASANADDADLDPHVAELPPRPLLEILARELRRRLGLRLFNIDMIREHGTRDRFYVIDMNYFPGYGKMPGYEHVFTDFLLSLVQKEYKRRPSYSSCEG</sequence>
<comment type="function">
    <text evidence="2">Kinase that can phosphorylate various inositol polyphosphate such as Ins(3,4,5,6)P4 or Ins(1,3,4)P3 and participates in phytic acid biosynthesis in developing seeds. Phytic acid is the primary storage form of phosphorus in cereal grains and other plant seeds.</text>
</comment>
<comment type="catalytic activity">
    <reaction evidence="4">
        <text>1D-myo-inositol 3,4,5,6-tetrakisphosphate + ATP = 1D-myo-inositol 1,3,4,5,6-pentakisphosphate + ADP + H(+)</text>
        <dbReference type="Rhea" id="RHEA:12452"/>
        <dbReference type="ChEBI" id="CHEBI:15378"/>
        <dbReference type="ChEBI" id="CHEBI:30616"/>
        <dbReference type="ChEBI" id="CHEBI:57539"/>
        <dbReference type="ChEBI" id="CHEBI:57733"/>
        <dbReference type="ChEBI" id="CHEBI:456216"/>
        <dbReference type="EC" id="2.7.1.134"/>
    </reaction>
</comment>
<comment type="catalytic activity">
    <reaction evidence="4">
        <text>1D-myo-inositol 1,3,4-trisphosphate + ATP = 1D-myo-inositol 1,3,4,5-tetrakisphosphate + ADP + H(+)</text>
        <dbReference type="Rhea" id="RHEA:13253"/>
        <dbReference type="ChEBI" id="CHEBI:15378"/>
        <dbReference type="ChEBI" id="CHEBI:30616"/>
        <dbReference type="ChEBI" id="CHEBI:57895"/>
        <dbReference type="ChEBI" id="CHEBI:58414"/>
        <dbReference type="ChEBI" id="CHEBI:456216"/>
        <dbReference type="EC" id="2.7.1.159"/>
    </reaction>
</comment>
<comment type="catalytic activity">
    <reaction evidence="4">
        <text>1D-myo-inositol 1,3,4-trisphosphate + ATP = 1D-myo-inositol 1,3,4,6-tetrakisphosphate + ADP + H(+)</text>
        <dbReference type="Rhea" id="RHEA:20940"/>
        <dbReference type="ChEBI" id="CHEBI:15378"/>
        <dbReference type="ChEBI" id="CHEBI:30616"/>
        <dbReference type="ChEBI" id="CHEBI:57660"/>
        <dbReference type="ChEBI" id="CHEBI:58414"/>
        <dbReference type="ChEBI" id="CHEBI:456216"/>
        <dbReference type="EC" id="2.7.1.159"/>
    </reaction>
</comment>
<comment type="cofactor">
    <cofactor evidence="1">
        <name>Mg(2+)</name>
        <dbReference type="ChEBI" id="CHEBI:18420"/>
    </cofactor>
    <text evidence="1">Binds 2 magnesium ions per subunit.</text>
</comment>
<comment type="subunit">
    <text evidence="1">Monomer.</text>
</comment>
<comment type="similarity">
    <text evidence="4">Belongs to the ITPK1 family.</text>
</comment>
<keyword id="KW-0067">ATP-binding</keyword>
<keyword id="KW-0418">Kinase</keyword>
<keyword id="KW-0460">Magnesium</keyword>
<keyword id="KW-0479">Metal-binding</keyword>
<keyword id="KW-0547">Nucleotide-binding</keyword>
<keyword id="KW-1185">Reference proteome</keyword>
<keyword id="KW-0808">Transferase</keyword>
<accession>B8AR41</accession>
<organism>
    <name type="scientific">Oryza sativa subsp. indica</name>
    <name type="common">Rice</name>
    <dbReference type="NCBI Taxonomy" id="39946"/>
    <lineage>
        <taxon>Eukaryota</taxon>
        <taxon>Viridiplantae</taxon>
        <taxon>Streptophyta</taxon>
        <taxon>Embryophyta</taxon>
        <taxon>Tracheophyta</taxon>
        <taxon>Spermatophyta</taxon>
        <taxon>Magnoliopsida</taxon>
        <taxon>Liliopsida</taxon>
        <taxon>Poales</taxon>
        <taxon>Poaceae</taxon>
        <taxon>BOP clade</taxon>
        <taxon>Oryzoideae</taxon>
        <taxon>Oryzeae</taxon>
        <taxon>Oryzinae</taxon>
        <taxon>Oryza</taxon>
        <taxon>Oryza sativa</taxon>
    </lineage>
</organism>
<proteinExistence type="inferred from homology"/>
<name>ITPK3_ORYSI</name>
<feature type="chain" id="PRO_0000431874" description="Inositol-tetrakisphosphate 1-kinase 3">
    <location>
        <begin position="1"/>
        <end position="357"/>
    </location>
</feature>
<feature type="binding site" evidence="3">
    <location>
        <position position="56"/>
    </location>
    <ligand>
        <name>1D-myo-inositol 1,3,4-trisphosphate</name>
        <dbReference type="ChEBI" id="CHEBI:58414"/>
    </ligand>
</feature>
<feature type="binding site" evidence="3">
    <location>
        <position position="98"/>
    </location>
    <ligand>
        <name>1D-myo-inositol 1,3,4-trisphosphate</name>
        <dbReference type="ChEBI" id="CHEBI:58414"/>
    </ligand>
</feature>
<feature type="binding site" evidence="1">
    <location>
        <position position="133"/>
    </location>
    <ligand>
        <name>ATP</name>
        <dbReference type="ChEBI" id="CHEBI:30616"/>
    </ligand>
</feature>
<feature type="binding site" evidence="1">
    <location>
        <position position="183"/>
    </location>
    <ligand>
        <name>ATP</name>
        <dbReference type="ChEBI" id="CHEBI:30616"/>
    </ligand>
</feature>
<feature type="binding site" evidence="3">
    <location>
        <position position="190"/>
    </location>
    <ligand>
        <name>1D-myo-inositol 1,3,4-trisphosphate</name>
        <dbReference type="ChEBI" id="CHEBI:58414"/>
    </ligand>
</feature>
<feature type="binding site" evidence="1">
    <location>
        <begin position="211"/>
        <end position="222"/>
    </location>
    <ligand>
        <name>ATP</name>
        <dbReference type="ChEBI" id="CHEBI:30616"/>
    </ligand>
</feature>
<feature type="binding site" evidence="3">
    <location>
        <position position="222"/>
    </location>
    <ligand>
        <name>1D-myo-inositol 1,3,4-trisphosphate</name>
        <dbReference type="ChEBI" id="CHEBI:58414"/>
    </ligand>
</feature>
<feature type="binding site" evidence="1">
    <location>
        <position position="237"/>
    </location>
    <ligand>
        <name>ATP</name>
        <dbReference type="ChEBI" id="CHEBI:30616"/>
    </ligand>
</feature>
<feature type="binding site" evidence="1">
    <location>
        <position position="262"/>
    </location>
    <ligand>
        <name>ATP</name>
        <dbReference type="ChEBI" id="CHEBI:30616"/>
    </ligand>
</feature>
<feature type="binding site" evidence="1">
    <location>
        <position position="302"/>
    </location>
    <ligand>
        <name>Mg(2+)</name>
        <dbReference type="ChEBI" id="CHEBI:18420"/>
        <label>1</label>
    </ligand>
</feature>
<feature type="binding site" evidence="1">
    <location>
        <position position="317"/>
    </location>
    <ligand>
        <name>Mg(2+)</name>
        <dbReference type="ChEBI" id="CHEBI:18420"/>
        <label>1</label>
    </ligand>
</feature>
<feature type="binding site" evidence="1">
    <location>
        <position position="317"/>
    </location>
    <ligand>
        <name>Mg(2+)</name>
        <dbReference type="ChEBI" id="CHEBI:18420"/>
        <label>2</label>
    </ligand>
</feature>
<feature type="binding site" evidence="3">
    <location>
        <position position="319"/>
    </location>
    <ligand>
        <name>1D-myo-inositol 1,3,4-trisphosphate</name>
        <dbReference type="ChEBI" id="CHEBI:58414"/>
    </ligand>
</feature>
<feature type="binding site" evidence="1">
    <location>
        <position position="319"/>
    </location>
    <ligand>
        <name>Mg(2+)</name>
        <dbReference type="ChEBI" id="CHEBI:18420"/>
        <label>2</label>
    </ligand>
</feature>
<gene>
    <name type="primary">ITPK3</name>
    <name evidence="5" type="ORF">OsI_13362</name>
</gene>
<reference key="1">
    <citation type="journal article" date="2005" name="PLoS Biol.">
        <title>The genomes of Oryza sativa: a history of duplications.</title>
        <authorList>
            <person name="Yu J."/>
            <person name="Wang J."/>
            <person name="Lin W."/>
            <person name="Li S."/>
            <person name="Li H."/>
            <person name="Zhou J."/>
            <person name="Ni P."/>
            <person name="Dong W."/>
            <person name="Hu S."/>
            <person name="Zeng C."/>
            <person name="Zhang J."/>
            <person name="Zhang Y."/>
            <person name="Li R."/>
            <person name="Xu Z."/>
            <person name="Li S."/>
            <person name="Li X."/>
            <person name="Zheng H."/>
            <person name="Cong L."/>
            <person name="Lin L."/>
            <person name="Yin J."/>
            <person name="Geng J."/>
            <person name="Li G."/>
            <person name="Shi J."/>
            <person name="Liu J."/>
            <person name="Lv H."/>
            <person name="Li J."/>
            <person name="Wang J."/>
            <person name="Deng Y."/>
            <person name="Ran L."/>
            <person name="Shi X."/>
            <person name="Wang X."/>
            <person name="Wu Q."/>
            <person name="Li C."/>
            <person name="Ren X."/>
            <person name="Wang J."/>
            <person name="Wang X."/>
            <person name="Li D."/>
            <person name="Liu D."/>
            <person name="Zhang X."/>
            <person name="Ji Z."/>
            <person name="Zhao W."/>
            <person name="Sun Y."/>
            <person name="Zhang Z."/>
            <person name="Bao J."/>
            <person name="Han Y."/>
            <person name="Dong L."/>
            <person name="Ji J."/>
            <person name="Chen P."/>
            <person name="Wu S."/>
            <person name="Liu J."/>
            <person name="Xiao Y."/>
            <person name="Bu D."/>
            <person name="Tan J."/>
            <person name="Yang L."/>
            <person name="Ye C."/>
            <person name="Zhang J."/>
            <person name="Xu J."/>
            <person name="Zhou Y."/>
            <person name="Yu Y."/>
            <person name="Zhang B."/>
            <person name="Zhuang S."/>
            <person name="Wei H."/>
            <person name="Liu B."/>
            <person name="Lei M."/>
            <person name="Yu H."/>
            <person name="Li Y."/>
            <person name="Xu H."/>
            <person name="Wei S."/>
            <person name="He X."/>
            <person name="Fang L."/>
            <person name="Zhang Z."/>
            <person name="Zhang Y."/>
            <person name="Huang X."/>
            <person name="Su Z."/>
            <person name="Tong W."/>
            <person name="Li J."/>
            <person name="Tong Z."/>
            <person name="Li S."/>
            <person name="Ye J."/>
            <person name="Wang L."/>
            <person name="Fang L."/>
            <person name="Lei T."/>
            <person name="Chen C.-S."/>
            <person name="Chen H.-C."/>
            <person name="Xu Z."/>
            <person name="Li H."/>
            <person name="Huang H."/>
            <person name="Zhang F."/>
            <person name="Xu H."/>
            <person name="Li N."/>
            <person name="Zhao C."/>
            <person name="Li S."/>
            <person name="Dong L."/>
            <person name="Huang Y."/>
            <person name="Li L."/>
            <person name="Xi Y."/>
            <person name="Qi Q."/>
            <person name="Li W."/>
            <person name="Zhang B."/>
            <person name="Hu W."/>
            <person name="Zhang Y."/>
            <person name="Tian X."/>
            <person name="Jiao Y."/>
            <person name="Liang X."/>
            <person name="Jin J."/>
            <person name="Gao L."/>
            <person name="Zheng W."/>
            <person name="Hao B."/>
            <person name="Liu S.-M."/>
            <person name="Wang W."/>
            <person name="Yuan L."/>
            <person name="Cao M."/>
            <person name="McDermott J."/>
            <person name="Samudrala R."/>
            <person name="Wang J."/>
            <person name="Wong G.K.-S."/>
            <person name="Yang H."/>
        </authorList>
    </citation>
    <scope>NUCLEOTIDE SEQUENCE [LARGE SCALE GENOMIC DNA]</scope>
    <source>
        <strain>cv. 93-11</strain>
    </source>
</reference>
<evidence type="ECO:0000250" key="1">
    <source>
        <dbReference type="UniProtKB" id="Q13572"/>
    </source>
</evidence>
<evidence type="ECO:0000250" key="2">
    <source>
        <dbReference type="UniProtKB" id="Q84Y01"/>
    </source>
</evidence>
<evidence type="ECO:0000250" key="3">
    <source>
        <dbReference type="UniProtKB" id="Q9XYQ1"/>
    </source>
</evidence>
<evidence type="ECO:0000305" key="4"/>
<evidence type="ECO:0000312" key="5">
    <source>
        <dbReference type="EMBL" id="EEC76104.1"/>
    </source>
</evidence>